<feature type="chain" id="PRO_0000104525" description="Serpentine receptor class delta-45">
    <location>
        <begin position="1"/>
        <end position="316"/>
    </location>
</feature>
<feature type="transmembrane region" description="Helical" evidence="1">
    <location>
        <begin position="8"/>
        <end position="28"/>
    </location>
</feature>
<feature type="transmembrane region" description="Helical" evidence="1">
    <location>
        <begin position="42"/>
        <end position="62"/>
    </location>
</feature>
<feature type="transmembrane region" description="Helical" evidence="1">
    <location>
        <begin position="91"/>
        <end position="111"/>
    </location>
</feature>
<feature type="transmembrane region" description="Helical" evidence="1">
    <location>
        <begin position="128"/>
        <end position="148"/>
    </location>
</feature>
<feature type="transmembrane region" description="Helical" evidence="1">
    <location>
        <begin position="184"/>
        <end position="204"/>
    </location>
</feature>
<feature type="transmembrane region" description="Helical" evidence="1">
    <location>
        <begin position="234"/>
        <end position="254"/>
    </location>
</feature>
<feature type="transmembrane region" description="Helical" evidence="1">
    <location>
        <begin position="266"/>
        <end position="286"/>
    </location>
</feature>
<reference key="1">
    <citation type="journal article" date="1998" name="Science">
        <title>Genome sequence of the nematode C. elegans: a platform for investigating biology.</title>
        <authorList>
            <consortium name="The C. elegans sequencing consortium"/>
        </authorList>
    </citation>
    <scope>NUCLEOTIDE SEQUENCE [LARGE SCALE GENOMIC DNA]</scope>
    <source>
        <strain>Bristol N2</strain>
    </source>
</reference>
<sequence length="316" mass="36147">MYRTVLSVFYPMFFILVIPSLILLIFIILRYSPDCFQTFKYILLVTCISQIVAVTTNCLIQIRQVSNLTPMEIWCYGPLRHFTALIAYSTYFLTQTAVVISNVLIFLTIYLKYLATKINTRKTCNYGVTFFILSPIFIALGAQTSLILTEGIPSENQDHLEKINFDISDHAVIGYIRLKTLPSIIITFVITGTILILPAVGLLLRKKTLRNINSNKFSITKKALIKGFINGVTLQVFLPLICYIPVFGSFLVLAETKTEVPFEQYFFSVLVMLPMLFDPYIILYSVAPYRKQIEKWIKTKRRQSILIVDPAARIGF</sequence>
<keyword id="KW-0472">Membrane</keyword>
<keyword id="KW-1185">Reference proteome</keyword>
<keyword id="KW-0812">Transmembrane</keyword>
<keyword id="KW-1133">Transmembrane helix</keyword>
<organism>
    <name type="scientific">Caenorhabditis elegans</name>
    <dbReference type="NCBI Taxonomy" id="6239"/>
    <lineage>
        <taxon>Eukaryota</taxon>
        <taxon>Metazoa</taxon>
        <taxon>Ecdysozoa</taxon>
        <taxon>Nematoda</taxon>
        <taxon>Chromadorea</taxon>
        <taxon>Rhabditida</taxon>
        <taxon>Rhabditina</taxon>
        <taxon>Rhabditomorpha</taxon>
        <taxon>Rhabditoidea</taxon>
        <taxon>Rhabditidae</taxon>
        <taxon>Peloderinae</taxon>
        <taxon>Caenorhabditis</taxon>
    </lineage>
</organism>
<evidence type="ECO:0000255" key="1"/>
<evidence type="ECO:0000305" key="2"/>
<accession>Q19505</accession>
<protein>
    <recommendedName>
        <fullName>Serpentine receptor class delta-45</fullName>
        <shortName>Protein srd-45</shortName>
    </recommendedName>
</protein>
<dbReference type="EMBL" id="Z68114">
    <property type="protein sequence ID" value="CAA92155.1"/>
    <property type="molecule type" value="Genomic_DNA"/>
</dbReference>
<dbReference type="PIR" id="T21039">
    <property type="entry name" value="T21039"/>
</dbReference>
<dbReference type="RefSeq" id="NP_510064.1">
    <property type="nucleotide sequence ID" value="NM_077663.1"/>
</dbReference>
<dbReference type="SMR" id="Q19505"/>
<dbReference type="FunCoup" id="Q19505">
    <property type="interactions" value="6"/>
</dbReference>
<dbReference type="STRING" id="6239.F17A2.7.1"/>
<dbReference type="PaxDb" id="6239-F17A2.7"/>
<dbReference type="EnsemblMetazoa" id="F17A2.7.1">
    <property type="protein sequence ID" value="F17A2.7.1"/>
    <property type="gene ID" value="WBGene00005123"/>
</dbReference>
<dbReference type="GeneID" id="184603"/>
<dbReference type="KEGG" id="cel:CELE_F17A2.7"/>
<dbReference type="UCSC" id="F17A2.7">
    <property type="organism name" value="c. elegans"/>
</dbReference>
<dbReference type="AGR" id="WB:WBGene00005123"/>
<dbReference type="CTD" id="184603"/>
<dbReference type="WormBase" id="F17A2.7">
    <property type="protein sequence ID" value="CE03217"/>
    <property type="gene ID" value="WBGene00005123"/>
    <property type="gene designation" value="srd-45"/>
</dbReference>
<dbReference type="eggNOG" id="ENOG502TDGT">
    <property type="taxonomic scope" value="Eukaryota"/>
</dbReference>
<dbReference type="GeneTree" id="ENSGT00970000195825"/>
<dbReference type="HOGENOM" id="CLU_057924_2_0_1"/>
<dbReference type="InParanoid" id="Q19505"/>
<dbReference type="OrthoDB" id="5863340at2759"/>
<dbReference type="PhylomeDB" id="Q19505"/>
<dbReference type="PRO" id="PR:Q19505"/>
<dbReference type="Proteomes" id="UP000001940">
    <property type="component" value="Chromosome X"/>
</dbReference>
<dbReference type="GO" id="GO:0016020">
    <property type="term" value="C:membrane"/>
    <property type="evidence" value="ECO:0007669"/>
    <property type="project" value="UniProtKB-SubCell"/>
</dbReference>
<dbReference type="InterPro" id="IPR019421">
    <property type="entry name" value="7TM_GPCR_serpentine_rcpt_Srd"/>
</dbReference>
<dbReference type="InterPro" id="IPR050920">
    <property type="entry name" value="Nematode_rcpt-like_delta"/>
</dbReference>
<dbReference type="PANTHER" id="PTHR22945:SF26">
    <property type="entry name" value="SERPENTINE RECEPTOR CLASS DELTA-45-RELATED"/>
    <property type="match status" value="1"/>
</dbReference>
<dbReference type="PANTHER" id="PTHR22945">
    <property type="entry name" value="SERPENTINE RECEPTOR, CLASS D DELTA"/>
    <property type="match status" value="1"/>
</dbReference>
<dbReference type="Pfam" id="PF10317">
    <property type="entry name" value="7TM_GPCR_Srd"/>
    <property type="match status" value="1"/>
</dbReference>
<name>SRD45_CAEEL</name>
<comment type="subcellular location">
    <subcellularLocation>
        <location evidence="2">Membrane</location>
        <topology evidence="2">Multi-pass membrane protein</topology>
    </subcellularLocation>
</comment>
<comment type="similarity">
    <text evidence="2">Belongs to the nematode receptor-like protein srd family.</text>
</comment>
<gene>
    <name type="primary">srd-45</name>
    <name type="ORF">F17A2.7</name>
</gene>
<proteinExistence type="inferred from homology"/>